<gene>
    <name type="ordered locus">RBE_0637</name>
</gene>
<comment type="sequence caution" evidence="3">
    <conflict type="erroneous initiation">
        <sequence resource="EMBL-CDS" id="ABE04718"/>
    </conflict>
</comment>
<proteinExistence type="inferred from homology"/>
<keyword id="KW-0732">Signal</keyword>
<name>Y637_RICBR</name>
<accession>Q1RIU6</accession>
<organism>
    <name type="scientific">Rickettsia bellii (strain RML369-C)</name>
    <dbReference type="NCBI Taxonomy" id="336407"/>
    <lineage>
        <taxon>Bacteria</taxon>
        <taxon>Pseudomonadati</taxon>
        <taxon>Pseudomonadota</taxon>
        <taxon>Alphaproteobacteria</taxon>
        <taxon>Rickettsiales</taxon>
        <taxon>Rickettsiaceae</taxon>
        <taxon>Rickettsieae</taxon>
        <taxon>Rickettsia</taxon>
        <taxon>belli group</taxon>
    </lineage>
</organism>
<feature type="signal peptide" evidence="1">
    <location>
        <begin position="1"/>
        <end position="19"/>
    </location>
</feature>
<feature type="chain" id="PRO_0000268846" description="Uncharacterized protein RBE_0637">
    <location>
        <begin position="20"/>
        <end position="292"/>
    </location>
</feature>
<feature type="region of interest" description="Disordered" evidence="2">
    <location>
        <begin position="271"/>
        <end position="292"/>
    </location>
</feature>
<evidence type="ECO:0000255" key="1"/>
<evidence type="ECO:0000256" key="2">
    <source>
        <dbReference type="SAM" id="MobiDB-lite"/>
    </source>
</evidence>
<evidence type="ECO:0000305" key="3"/>
<reference key="1">
    <citation type="journal article" date="2006" name="PLoS Genet.">
        <title>Genome sequence of Rickettsia bellii illuminates the role of amoebae in gene exchanges between intracellular pathogens.</title>
        <authorList>
            <person name="Ogata H."/>
            <person name="La Scola B."/>
            <person name="Audic S."/>
            <person name="Renesto P."/>
            <person name="Blanc G."/>
            <person name="Robert C."/>
            <person name="Fournier P.-E."/>
            <person name="Claverie J.-M."/>
            <person name="Raoult D."/>
        </authorList>
    </citation>
    <scope>NUCLEOTIDE SEQUENCE [LARGE SCALE GENOMIC DNA]</scope>
    <source>
        <strain>RML369-C</strain>
    </source>
</reference>
<dbReference type="EMBL" id="CP000087">
    <property type="protein sequence ID" value="ABE04718.1"/>
    <property type="status" value="ALT_INIT"/>
    <property type="molecule type" value="Genomic_DNA"/>
</dbReference>
<dbReference type="RefSeq" id="WP_012151907.1">
    <property type="nucleotide sequence ID" value="NC_007940.1"/>
</dbReference>
<dbReference type="KEGG" id="rbe:RBE_0637"/>
<dbReference type="HOGENOM" id="CLU_946219_0_0_5"/>
<dbReference type="OrthoDB" id="7161142at2"/>
<dbReference type="Proteomes" id="UP000001951">
    <property type="component" value="Chromosome"/>
</dbReference>
<dbReference type="InterPro" id="IPR022565">
    <property type="entry name" value="DUF2608"/>
</dbReference>
<dbReference type="Pfam" id="PF11019">
    <property type="entry name" value="DUF2608"/>
    <property type="match status" value="1"/>
</dbReference>
<protein>
    <recommendedName>
        <fullName>Uncharacterized protein RBE_0637</fullName>
    </recommendedName>
</protein>
<sequence>MFKKYIFILLLLVTSIVKAENIEVNNLDKIKQDFEENYIKNYLPQDLLVVIDLDKILFKPLLSLGEQIDKDVYAKLAPTLQKISKNPKNIYIDQLILTSDKYKKELLDSNFPNFVSDIRNKNIPIIAVNGGFTGNFNNIPKFEIWIADYLKKNFNIDFSNSFPKNNYIIFNNLKSFSNTYPVFYKGILTSNNISGAELMINFFVQMNFMPKVLIMVSGSTELLSSMEAQLANYSSSVLFIGYYYNNQDSRDNNANYNVIINDLTNQMNNIKRNNPPLKTNNAKSKNPYDQSK</sequence>